<organism>
    <name type="scientific">Mus musculus</name>
    <name type="common">Mouse</name>
    <dbReference type="NCBI Taxonomy" id="10090"/>
    <lineage>
        <taxon>Eukaryota</taxon>
        <taxon>Metazoa</taxon>
        <taxon>Chordata</taxon>
        <taxon>Craniata</taxon>
        <taxon>Vertebrata</taxon>
        <taxon>Euteleostomi</taxon>
        <taxon>Mammalia</taxon>
        <taxon>Eutheria</taxon>
        <taxon>Euarchontoglires</taxon>
        <taxon>Glires</taxon>
        <taxon>Rodentia</taxon>
        <taxon>Myomorpha</taxon>
        <taxon>Muroidea</taxon>
        <taxon>Muridae</taxon>
        <taxon>Murinae</taxon>
        <taxon>Mus</taxon>
        <taxon>Mus</taxon>
    </lineage>
</organism>
<keyword id="KW-0010">Activator</keyword>
<keyword id="KW-0025">Alternative splicing</keyword>
<keyword id="KW-0238">DNA-binding</keyword>
<keyword id="KW-1017">Isopeptide bond</keyword>
<keyword id="KW-0539">Nucleus</keyword>
<keyword id="KW-0597">Phosphoprotein</keyword>
<keyword id="KW-1185">Reference proteome</keyword>
<keyword id="KW-0804">Transcription</keyword>
<keyword id="KW-0805">Transcription regulation</keyword>
<keyword id="KW-0832">Ubl conjugation</keyword>
<feature type="chain" id="PRO_0000100209" description="Nuclear respiratory factor 1">
    <location>
        <begin position="1"/>
        <end position="503"/>
    </location>
</feature>
<feature type="DNA-binding region" evidence="1">
    <location>
        <begin position="109"/>
        <end position="305"/>
    </location>
</feature>
<feature type="region of interest" description="Dimerization" evidence="1">
    <location>
        <begin position="1"/>
        <end position="78"/>
    </location>
</feature>
<feature type="region of interest" description="Disordered" evidence="3">
    <location>
        <begin position="36"/>
        <end position="57"/>
    </location>
</feature>
<feature type="region of interest" description="Required for transcriptional activation" evidence="1">
    <location>
        <begin position="301"/>
        <end position="476"/>
    </location>
</feature>
<feature type="short sequence motif" description="Nuclear localization signal" evidence="1">
    <location>
        <begin position="88"/>
        <end position="116"/>
    </location>
</feature>
<feature type="modified residue" description="Phosphoserine; by CK2" evidence="2">
    <location>
        <position position="39"/>
    </location>
</feature>
<feature type="modified residue" description="Phosphoserine; by CK2" evidence="2">
    <location>
        <position position="44"/>
    </location>
</feature>
<feature type="modified residue" description="Phosphoserine; by CK2" evidence="2">
    <location>
        <position position="46"/>
    </location>
</feature>
<feature type="modified residue" description="Phosphoserine; by CK2" evidence="2">
    <location>
        <position position="47"/>
    </location>
</feature>
<feature type="modified residue" description="Phosphoserine; by CK2" evidence="2">
    <location>
        <position position="52"/>
    </location>
</feature>
<feature type="cross-link" description="Glycyl lysine isopeptide (Lys-Gly) (interchain with G-Cter in SUMO2)" evidence="2">
    <location>
        <position position="139"/>
    </location>
</feature>
<feature type="splice variant" id="VSP_003599" description="In isoform Short." evidence="4">
    <location>
        <begin position="256"/>
        <end position="321"/>
    </location>
</feature>
<feature type="sequence conflict" description="In Ref. 1; AAD21938." evidence="5" ref="1">
    <original>K</original>
    <variation>N</variation>
    <location>
        <position position="92"/>
    </location>
</feature>
<gene>
    <name type="primary">Nrf1</name>
</gene>
<sequence>MEEHGVTQTEHMATIEAHAVAQQVQQVHVATYTEHSMLSADEDSPSSPEDTSYDDSDILNSTAADEVTAHLAAAGPVGMAAAAAVATGKKRKRPHVFESNPSIRKRQQTRLLRKLRATLDEYTTRVGQQAIVLCISPSKPNPVFKVFGAAPLENVVRKYKSMILEDLESALAEHAPAPQEVNSELPPLTIDGIPVSVDKMTQAQLRAFIPEMLKYSTGRGKPGWGKESCKPIWWPEDIPWANVRSDVRTEEQKQRVSWTQALRTIVKNCYKQHGREDLLYAFEDQQTQTQATTTHSIAHLVPSQTVVQTFSNPDGTVSLIQVGTGATVATLADASELPTTVTVAQVNYSAVADGEVEQNWATLQGGEMTIQTTQASEATQAVASLAEAAVAASQEMQQGATVTMALNSEAAAHAVATLAEATLQGGGQIVLSGETAAAVGALTGVQDANGLVQIPVSMYQTVVTSLAQGNGPVQVAMAPVTTRISDSAVTMDGQAVEVVTLEQ</sequence>
<accession>Q9WU00</accession>
<accession>Q9CXE4</accession>
<dbReference type="EMBL" id="AF098077">
    <property type="protein sequence ID" value="AAD21938.1"/>
    <property type="molecule type" value="mRNA"/>
</dbReference>
<dbReference type="EMBL" id="AK014494">
    <property type="protein sequence ID" value="BAB29394.1"/>
    <property type="molecule type" value="mRNA"/>
</dbReference>
<dbReference type="EMBL" id="AK029034">
    <property type="protein sequence ID" value="BAC26256.1"/>
    <property type="molecule type" value="mRNA"/>
</dbReference>
<dbReference type="EMBL" id="CH466533">
    <property type="protein sequence ID" value="EDL13755.1"/>
    <property type="molecule type" value="Genomic_DNA"/>
</dbReference>
<dbReference type="EMBL" id="CH466533">
    <property type="protein sequence ID" value="EDL13757.1"/>
    <property type="molecule type" value="Genomic_DNA"/>
</dbReference>
<dbReference type="CCDS" id="CCDS19968.1">
    <molecule id="Q9WU00-1"/>
</dbReference>
<dbReference type="RefSeq" id="NP_001157698.1">
    <molecule id="Q9WU00-1"/>
    <property type="nucleotide sequence ID" value="NM_001164226.2"/>
</dbReference>
<dbReference type="RefSeq" id="NP_001348623.1">
    <molecule id="Q9WU00-1"/>
    <property type="nucleotide sequence ID" value="NM_001361694.2"/>
</dbReference>
<dbReference type="RefSeq" id="NP_001348624.1">
    <molecule id="Q9WU00-1"/>
    <property type="nucleotide sequence ID" value="NM_001361695.2"/>
</dbReference>
<dbReference type="RefSeq" id="NP_035068.3">
    <molecule id="Q9WU00-1"/>
    <property type="nucleotide sequence ID" value="NM_010938.4"/>
</dbReference>
<dbReference type="RefSeq" id="XP_017176933.1">
    <property type="nucleotide sequence ID" value="XM_017321444.1"/>
</dbReference>
<dbReference type="RefSeq" id="XP_017176934.1">
    <property type="nucleotide sequence ID" value="XM_017321445.1"/>
</dbReference>
<dbReference type="RefSeq" id="XP_030111078.1">
    <molecule id="Q9WU00-1"/>
    <property type="nucleotide sequence ID" value="XM_030255218.2"/>
</dbReference>
<dbReference type="SMR" id="Q9WU00"/>
<dbReference type="BioGRID" id="201845">
    <property type="interactions" value="4"/>
</dbReference>
<dbReference type="DIP" id="DIP-61236N"/>
<dbReference type="FunCoup" id="Q9WU00">
    <property type="interactions" value="4820"/>
</dbReference>
<dbReference type="IntAct" id="Q9WU00">
    <property type="interactions" value="2"/>
</dbReference>
<dbReference type="MINT" id="Q9WU00"/>
<dbReference type="STRING" id="10090.ENSMUSP00000110860"/>
<dbReference type="iPTMnet" id="Q9WU00"/>
<dbReference type="PhosphoSitePlus" id="Q9WU00"/>
<dbReference type="jPOST" id="Q9WU00"/>
<dbReference type="PaxDb" id="10090-ENSMUSP00000110860"/>
<dbReference type="PeptideAtlas" id="Q9WU00"/>
<dbReference type="ProteomicsDB" id="293730">
    <molecule id="Q9WU00-1"/>
</dbReference>
<dbReference type="ProteomicsDB" id="293731">
    <molecule id="Q9WU00-2"/>
</dbReference>
<dbReference type="Pumba" id="Q9WU00"/>
<dbReference type="Antibodypedia" id="17908">
    <property type="antibodies" value="474 antibodies from 37 providers"/>
</dbReference>
<dbReference type="DNASU" id="18181"/>
<dbReference type="Ensembl" id="ENSMUST00000115209.8">
    <molecule id="Q9WU00-1"/>
    <property type="protein sequence ID" value="ENSMUSP00000110864.2"/>
    <property type="gene ID" value="ENSMUSG00000058440.15"/>
</dbReference>
<dbReference type="Ensembl" id="ENSMUST00000115211.8">
    <molecule id="Q9WU00-1"/>
    <property type="protein sequence ID" value="ENSMUSP00000110866.2"/>
    <property type="gene ID" value="ENSMUSG00000058440.15"/>
</dbReference>
<dbReference type="Ensembl" id="ENSMUST00000115212.8">
    <molecule id="Q9WU00-1"/>
    <property type="protein sequence ID" value="ENSMUSP00000110867.2"/>
    <property type="gene ID" value="ENSMUSG00000058440.15"/>
</dbReference>
<dbReference type="Ensembl" id="ENSMUST00000167972.9">
    <molecule id="Q9WU00-1"/>
    <property type="protein sequence ID" value="ENSMUSP00000130108.3"/>
    <property type="gene ID" value="ENSMUSG00000058440.15"/>
</dbReference>
<dbReference type="GeneID" id="18181"/>
<dbReference type="KEGG" id="mmu:18181"/>
<dbReference type="UCSC" id="uc009bev.1">
    <molecule id="Q9WU00-1"/>
    <property type="organism name" value="mouse"/>
</dbReference>
<dbReference type="AGR" id="MGI:1332235"/>
<dbReference type="CTD" id="4899"/>
<dbReference type="MGI" id="MGI:1332235">
    <property type="gene designation" value="Nrf1"/>
</dbReference>
<dbReference type="VEuPathDB" id="HostDB:ENSMUSG00000058440"/>
<dbReference type="eggNOG" id="KOG1491">
    <property type="taxonomic scope" value="Eukaryota"/>
</dbReference>
<dbReference type="GeneTree" id="ENSGT00390000006835"/>
<dbReference type="HOGENOM" id="CLU_018156_3_1_1"/>
<dbReference type="InParanoid" id="Q9WU00"/>
<dbReference type="OMA" id="EVEPSWA"/>
<dbReference type="OrthoDB" id="10031051at2759"/>
<dbReference type="BioGRID-ORCS" id="18181">
    <property type="hits" value="28 hits in 80 CRISPR screens"/>
</dbReference>
<dbReference type="ChiTaRS" id="Nrf1">
    <property type="organism name" value="mouse"/>
</dbReference>
<dbReference type="PRO" id="PR:Q9WU00"/>
<dbReference type="Proteomes" id="UP000000589">
    <property type="component" value="Chromosome 6"/>
</dbReference>
<dbReference type="RNAct" id="Q9WU00">
    <property type="molecule type" value="protein"/>
</dbReference>
<dbReference type="Bgee" id="ENSMUSG00000058440">
    <property type="expression patterns" value="Expressed in animal zygote and 235 other cell types or tissues"/>
</dbReference>
<dbReference type="ExpressionAtlas" id="Q9WU00">
    <property type="expression patterns" value="baseline and differential"/>
</dbReference>
<dbReference type="GO" id="GO:0005654">
    <property type="term" value="C:nucleoplasm"/>
    <property type="evidence" value="ECO:0000304"/>
    <property type="project" value="Reactome"/>
</dbReference>
<dbReference type="GO" id="GO:0005634">
    <property type="term" value="C:nucleus"/>
    <property type="evidence" value="ECO:0000250"/>
    <property type="project" value="AgBase"/>
</dbReference>
<dbReference type="GO" id="GO:0005667">
    <property type="term" value="C:transcription regulator complex"/>
    <property type="evidence" value="ECO:0000304"/>
    <property type="project" value="MGI"/>
</dbReference>
<dbReference type="GO" id="GO:0003700">
    <property type="term" value="F:DNA-binding transcription factor activity"/>
    <property type="evidence" value="ECO:0000304"/>
    <property type="project" value="MGI"/>
</dbReference>
<dbReference type="GO" id="GO:0042803">
    <property type="term" value="F:protein homodimerization activity"/>
    <property type="evidence" value="ECO:0000250"/>
    <property type="project" value="AgBase"/>
</dbReference>
<dbReference type="GO" id="GO:0000978">
    <property type="term" value="F:RNA polymerase II cis-regulatory region sequence-specific DNA binding"/>
    <property type="evidence" value="ECO:0000250"/>
    <property type="project" value="AgBase"/>
</dbReference>
<dbReference type="GO" id="GO:0007005">
    <property type="term" value="P:mitochondrion organization"/>
    <property type="evidence" value="ECO:0000315"/>
    <property type="project" value="MGI"/>
</dbReference>
<dbReference type="GO" id="GO:0006357">
    <property type="term" value="P:regulation of transcription by RNA polymerase II"/>
    <property type="evidence" value="ECO:0007669"/>
    <property type="project" value="InterPro"/>
</dbReference>
<dbReference type="InterPro" id="IPR039142">
    <property type="entry name" value="NRF1/Ewg"/>
</dbReference>
<dbReference type="InterPro" id="IPR019525">
    <property type="entry name" value="Nrf1_NLS/DNA-bd_dimer"/>
</dbReference>
<dbReference type="PANTHER" id="PTHR20338">
    <property type="entry name" value="NUCLEAR RESPIRATORY FACTOR 1"/>
    <property type="match status" value="1"/>
</dbReference>
<dbReference type="Pfam" id="PF10491">
    <property type="entry name" value="Nrf1_DNA-bind"/>
    <property type="match status" value="1"/>
</dbReference>
<protein>
    <recommendedName>
        <fullName>Nuclear respiratory factor 1</fullName>
        <shortName>NRF-1</shortName>
    </recommendedName>
    <alternativeName>
        <fullName>Alpha palindromic-binding protein</fullName>
        <shortName>Alpha-pal</shortName>
    </alternativeName>
</protein>
<proteinExistence type="evidence at protein level"/>
<comment type="function">
    <text evidence="1">Transcription factor that activates the expression of the EIF2S1 (EIF2-alpha) gene. Links the transcriptional modulation of key metabolic genes to cellular growth and development. Implicated in the control of nuclear genes required for respiration, heme biosynthesis, and mitochondrial DNA transcription and replication (By similarity).</text>
</comment>
<comment type="subunit">
    <text evidence="1">Homodimer. Binds DNA as a dimer. Interacts with PPRC1 (By similarity).</text>
</comment>
<comment type="interaction">
    <interactant intactId="EBI-11291138">
        <id>Q9WU00</id>
    </interactant>
    <interactant intactId="EBI-7614183">
        <id>P56558</id>
        <label>Ogt</label>
    </interactant>
    <organismsDiffer>true</organismsDiffer>
    <experiments>2</experiments>
</comment>
<comment type="subcellular location">
    <subcellularLocation>
        <location>Nucleus</location>
    </subcellularLocation>
</comment>
<comment type="alternative products">
    <event type="alternative splicing"/>
    <isoform>
        <id>Q9WU00-1</id>
        <name>Long</name>
        <sequence type="displayed"/>
    </isoform>
    <isoform>
        <id>Q9WU00-2</id>
        <name>Short</name>
        <sequence type="described" ref="VSP_003599"/>
    </isoform>
</comment>
<comment type="tissue specificity">
    <text>Widely expressed in embryonic, fetal, and adult tissues.</text>
</comment>
<comment type="PTM">
    <text evidence="1">Phosphorylation enhances DNA binding.</text>
</comment>
<comment type="similarity">
    <text evidence="5">Belongs to the NRF1/Ewg family.</text>
</comment>
<reference key="1">
    <citation type="journal article" date="2000" name="Mamm. Genome">
        <title>Coding sequence, chromosomal localization, and expression pattern of Nrf1: the mouse homolog of Drosophila erect wing.</title>
        <authorList>
            <person name="Schaefer L."/>
            <person name="Engman H."/>
            <person name="Miller J.B."/>
        </authorList>
    </citation>
    <scope>NUCLEOTIDE SEQUENCE [MRNA] (ISOFORMS LONG AND SHORT)</scope>
</reference>
<reference key="2">
    <citation type="journal article" date="2005" name="Science">
        <title>The transcriptional landscape of the mammalian genome.</title>
        <authorList>
            <person name="Carninci P."/>
            <person name="Kasukawa T."/>
            <person name="Katayama S."/>
            <person name="Gough J."/>
            <person name="Frith M.C."/>
            <person name="Maeda N."/>
            <person name="Oyama R."/>
            <person name="Ravasi T."/>
            <person name="Lenhard B."/>
            <person name="Wells C."/>
            <person name="Kodzius R."/>
            <person name="Shimokawa K."/>
            <person name="Bajic V.B."/>
            <person name="Brenner S.E."/>
            <person name="Batalov S."/>
            <person name="Forrest A.R."/>
            <person name="Zavolan M."/>
            <person name="Davis M.J."/>
            <person name="Wilming L.G."/>
            <person name="Aidinis V."/>
            <person name="Allen J.E."/>
            <person name="Ambesi-Impiombato A."/>
            <person name="Apweiler R."/>
            <person name="Aturaliya R.N."/>
            <person name="Bailey T.L."/>
            <person name="Bansal M."/>
            <person name="Baxter L."/>
            <person name="Beisel K.W."/>
            <person name="Bersano T."/>
            <person name="Bono H."/>
            <person name="Chalk A.M."/>
            <person name="Chiu K.P."/>
            <person name="Choudhary V."/>
            <person name="Christoffels A."/>
            <person name="Clutterbuck D.R."/>
            <person name="Crowe M.L."/>
            <person name="Dalla E."/>
            <person name="Dalrymple B.P."/>
            <person name="de Bono B."/>
            <person name="Della Gatta G."/>
            <person name="di Bernardo D."/>
            <person name="Down T."/>
            <person name="Engstrom P."/>
            <person name="Fagiolini M."/>
            <person name="Faulkner G."/>
            <person name="Fletcher C.F."/>
            <person name="Fukushima T."/>
            <person name="Furuno M."/>
            <person name="Futaki S."/>
            <person name="Gariboldi M."/>
            <person name="Georgii-Hemming P."/>
            <person name="Gingeras T.R."/>
            <person name="Gojobori T."/>
            <person name="Green R.E."/>
            <person name="Gustincich S."/>
            <person name="Harbers M."/>
            <person name="Hayashi Y."/>
            <person name="Hensch T.K."/>
            <person name="Hirokawa N."/>
            <person name="Hill D."/>
            <person name="Huminiecki L."/>
            <person name="Iacono M."/>
            <person name="Ikeo K."/>
            <person name="Iwama A."/>
            <person name="Ishikawa T."/>
            <person name="Jakt M."/>
            <person name="Kanapin A."/>
            <person name="Katoh M."/>
            <person name="Kawasawa Y."/>
            <person name="Kelso J."/>
            <person name="Kitamura H."/>
            <person name="Kitano H."/>
            <person name="Kollias G."/>
            <person name="Krishnan S.P."/>
            <person name="Kruger A."/>
            <person name="Kummerfeld S.K."/>
            <person name="Kurochkin I.V."/>
            <person name="Lareau L.F."/>
            <person name="Lazarevic D."/>
            <person name="Lipovich L."/>
            <person name="Liu J."/>
            <person name="Liuni S."/>
            <person name="McWilliam S."/>
            <person name="Madan Babu M."/>
            <person name="Madera M."/>
            <person name="Marchionni L."/>
            <person name="Matsuda H."/>
            <person name="Matsuzawa S."/>
            <person name="Miki H."/>
            <person name="Mignone F."/>
            <person name="Miyake S."/>
            <person name="Morris K."/>
            <person name="Mottagui-Tabar S."/>
            <person name="Mulder N."/>
            <person name="Nakano N."/>
            <person name="Nakauchi H."/>
            <person name="Ng P."/>
            <person name="Nilsson R."/>
            <person name="Nishiguchi S."/>
            <person name="Nishikawa S."/>
            <person name="Nori F."/>
            <person name="Ohara O."/>
            <person name="Okazaki Y."/>
            <person name="Orlando V."/>
            <person name="Pang K.C."/>
            <person name="Pavan W.J."/>
            <person name="Pavesi G."/>
            <person name="Pesole G."/>
            <person name="Petrovsky N."/>
            <person name="Piazza S."/>
            <person name="Reed J."/>
            <person name="Reid J.F."/>
            <person name="Ring B.Z."/>
            <person name="Ringwald M."/>
            <person name="Rost B."/>
            <person name="Ruan Y."/>
            <person name="Salzberg S.L."/>
            <person name="Sandelin A."/>
            <person name="Schneider C."/>
            <person name="Schoenbach C."/>
            <person name="Sekiguchi K."/>
            <person name="Semple C.A."/>
            <person name="Seno S."/>
            <person name="Sessa L."/>
            <person name="Sheng Y."/>
            <person name="Shibata Y."/>
            <person name="Shimada H."/>
            <person name="Shimada K."/>
            <person name="Silva D."/>
            <person name="Sinclair B."/>
            <person name="Sperling S."/>
            <person name="Stupka E."/>
            <person name="Sugiura K."/>
            <person name="Sultana R."/>
            <person name="Takenaka Y."/>
            <person name="Taki K."/>
            <person name="Tammoja K."/>
            <person name="Tan S.L."/>
            <person name="Tang S."/>
            <person name="Taylor M.S."/>
            <person name="Tegner J."/>
            <person name="Teichmann S.A."/>
            <person name="Ueda H.R."/>
            <person name="van Nimwegen E."/>
            <person name="Verardo R."/>
            <person name="Wei C.L."/>
            <person name="Yagi K."/>
            <person name="Yamanishi H."/>
            <person name="Zabarovsky E."/>
            <person name="Zhu S."/>
            <person name="Zimmer A."/>
            <person name="Hide W."/>
            <person name="Bult C."/>
            <person name="Grimmond S.M."/>
            <person name="Teasdale R.D."/>
            <person name="Liu E.T."/>
            <person name="Brusic V."/>
            <person name="Quackenbush J."/>
            <person name="Wahlestedt C."/>
            <person name="Mattick J.S."/>
            <person name="Hume D.A."/>
            <person name="Kai C."/>
            <person name="Sasaki D."/>
            <person name="Tomaru Y."/>
            <person name="Fukuda S."/>
            <person name="Kanamori-Katayama M."/>
            <person name="Suzuki M."/>
            <person name="Aoki J."/>
            <person name="Arakawa T."/>
            <person name="Iida J."/>
            <person name="Imamura K."/>
            <person name="Itoh M."/>
            <person name="Kato T."/>
            <person name="Kawaji H."/>
            <person name="Kawagashira N."/>
            <person name="Kawashima T."/>
            <person name="Kojima M."/>
            <person name="Kondo S."/>
            <person name="Konno H."/>
            <person name="Nakano K."/>
            <person name="Ninomiya N."/>
            <person name="Nishio T."/>
            <person name="Okada M."/>
            <person name="Plessy C."/>
            <person name="Shibata K."/>
            <person name="Shiraki T."/>
            <person name="Suzuki S."/>
            <person name="Tagami M."/>
            <person name="Waki K."/>
            <person name="Watahiki A."/>
            <person name="Okamura-Oho Y."/>
            <person name="Suzuki H."/>
            <person name="Kawai J."/>
            <person name="Hayashizaki Y."/>
        </authorList>
    </citation>
    <scope>NUCLEOTIDE SEQUENCE [LARGE SCALE MRNA]</scope>
    <source>
        <strain>C57BL/6J</strain>
        <tissue>Liver</tissue>
        <tissue>Skin</tissue>
    </source>
</reference>
<reference key="3">
    <citation type="submission" date="2005-09" db="EMBL/GenBank/DDBJ databases">
        <authorList>
            <person name="Mural R.J."/>
            <person name="Adams M.D."/>
            <person name="Myers E.W."/>
            <person name="Smith H.O."/>
            <person name="Venter J.C."/>
        </authorList>
    </citation>
    <scope>NUCLEOTIDE SEQUENCE [LARGE SCALE GENOMIC DNA]</scope>
</reference>
<name>NRF1_MOUSE</name>
<evidence type="ECO:0000250" key="1"/>
<evidence type="ECO:0000250" key="2">
    <source>
        <dbReference type="UniProtKB" id="Q16656"/>
    </source>
</evidence>
<evidence type="ECO:0000256" key="3">
    <source>
        <dbReference type="SAM" id="MobiDB-lite"/>
    </source>
</evidence>
<evidence type="ECO:0000303" key="4">
    <source>
    </source>
</evidence>
<evidence type="ECO:0000305" key="5"/>